<reference key="1">
    <citation type="journal article" date="2001" name="J. Biol. Chem.">
        <title>Characterization of a new subfamily of winged-helix/forkhead (Fox) genes that are expressed in the lung and act as transcriptional repressors.</title>
        <authorList>
            <person name="Shu W."/>
            <person name="Yang H."/>
            <person name="Zhang L."/>
            <person name="Lu M.M."/>
            <person name="Morrisey E.E."/>
        </authorList>
    </citation>
    <scope>NUCLEOTIDE SEQUENCE [MRNA] (ISOFORMS 1; 2 AND 3)</scope>
    <scope>FUNCTION</scope>
    <source>
        <strain>C57BL/6J</strain>
        <tissue>Lung</tissue>
    </source>
</reference>
<reference key="2">
    <citation type="journal article" date="2005" name="Science">
        <title>The transcriptional landscape of the mammalian genome.</title>
        <authorList>
            <person name="Carninci P."/>
            <person name="Kasukawa T."/>
            <person name="Katayama S."/>
            <person name="Gough J."/>
            <person name="Frith M.C."/>
            <person name="Maeda N."/>
            <person name="Oyama R."/>
            <person name="Ravasi T."/>
            <person name="Lenhard B."/>
            <person name="Wells C."/>
            <person name="Kodzius R."/>
            <person name="Shimokawa K."/>
            <person name="Bajic V.B."/>
            <person name="Brenner S.E."/>
            <person name="Batalov S."/>
            <person name="Forrest A.R."/>
            <person name="Zavolan M."/>
            <person name="Davis M.J."/>
            <person name="Wilming L.G."/>
            <person name="Aidinis V."/>
            <person name="Allen J.E."/>
            <person name="Ambesi-Impiombato A."/>
            <person name="Apweiler R."/>
            <person name="Aturaliya R.N."/>
            <person name="Bailey T.L."/>
            <person name="Bansal M."/>
            <person name="Baxter L."/>
            <person name="Beisel K.W."/>
            <person name="Bersano T."/>
            <person name="Bono H."/>
            <person name="Chalk A.M."/>
            <person name="Chiu K.P."/>
            <person name="Choudhary V."/>
            <person name="Christoffels A."/>
            <person name="Clutterbuck D.R."/>
            <person name="Crowe M.L."/>
            <person name="Dalla E."/>
            <person name="Dalrymple B.P."/>
            <person name="de Bono B."/>
            <person name="Della Gatta G."/>
            <person name="di Bernardo D."/>
            <person name="Down T."/>
            <person name="Engstrom P."/>
            <person name="Fagiolini M."/>
            <person name="Faulkner G."/>
            <person name="Fletcher C.F."/>
            <person name="Fukushima T."/>
            <person name="Furuno M."/>
            <person name="Futaki S."/>
            <person name="Gariboldi M."/>
            <person name="Georgii-Hemming P."/>
            <person name="Gingeras T.R."/>
            <person name="Gojobori T."/>
            <person name="Green R.E."/>
            <person name="Gustincich S."/>
            <person name="Harbers M."/>
            <person name="Hayashi Y."/>
            <person name="Hensch T.K."/>
            <person name="Hirokawa N."/>
            <person name="Hill D."/>
            <person name="Huminiecki L."/>
            <person name="Iacono M."/>
            <person name="Ikeo K."/>
            <person name="Iwama A."/>
            <person name="Ishikawa T."/>
            <person name="Jakt M."/>
            <person name="Kanapin A."/>
            <person name="Katoh M."/>
            <person name="Kawasawa Y."/>
            <person name="Kelso J."/>
            <person name="Kitamura H."/>
            <person name="Kitano H."/>
            <person name="Kollias G."/>
            <person name="Krishnan S.P."/>
            <person name="Kruger A."/>
            <person name="Kummerfeld S.K."/>
            <person name="Kurochkin I.V."/>
            <person name="Lareau L.F."/>
            <person name="Lazarevic D."/>
            <person name="Lipovich L."/>
            <person name="Liu J."/>
            <person name="Liuni S."/>
            <person name="McWilliam S."/>
            <person name="Madan Babu M."/>
            <person name="Madera M."/>
            <person name="Marchionni L."/>
            <person name="Matsuda H."/>
            <person name="Matsuzawa S."/>
            <person name="Miki H."/>
            <person name="Mignone F."/>
            <person name="Miyake S."/>
            <person name="Morris K."/>
            <person name="Mottagui-Tabar S."/>
            <person name="Mulder N."/>
            <person name="Nakano N."/>
            <person name="Nakauchi H."/>
            <person name="Ng P."/>
            <person name="Nilsson R."/>
            <person name="Nishiguchi S."/>
            <person name="Nishikawa S."/>
            <person name="Nori F."/>
            <person name="Ohara O."/>
            <person name="Okazaki Y."/>
            <person name="Orlando V."/>
            <person name="Pang K.C."/>
            <person name="Pavan W.J."/>
            <person name="Pavesi G."/>
            <person name="Pesole G."/>
            <person name="Petrovsky N."/>
            <person name="Piazza S."/>
            <person name="Reed J."/>
            <person name="Reid J.F."/>
            <person name="Ring B.Z."/>
            <person name="Ringwald M."/>
            <person name="Rost B."/>
            <person name="Ruan Y."/>
            <person name="Salzberg S.L."/>
            <person name="Sandelin A."/>
            <person name="Schneider C."/>
            <person name="Schoenbach C."/>
            <person name="Sekiguchi K."/>
            <person name="Semple C.A."/>
            <person name="Seno S."/>
            <person name="Sessa L."/>
            <person name="Sheng Y."/>
            <person name="Shibata Y."/>
            <person name="Shimada H."/>
            <person name="Shimada K."/>
            <person name="Silva D."/>
            <person name="Sinclair B."/>
            <person name="Sperling S."/>
            <person name="Stupka E."/>
            <person name="Sugiura K."/>
            <person name="Sultana R."/>
            <person name="Takenaka Y."/>
            <person name="Taki K."/>
            <person name="Tammoja K."/>
            <person name="Tan S.L."/>
            <person name="Tang S."/>
            <person name="Taylor M.S."/>
            <person name="Tegner J."/>
            <person name="Teichmann S.A."/>
            <person name="Ueda H.R."/>
            <person name="van Nimwegen E."/>
            <person name="Verardo R."/>
            <person name="Wei C.L."/>
            <person name="Yagi K."/>
            <person name="Yamanishi H."/>
            <person name="Zabarovsky E."/>
            <person name="Zhu S."/>
            <person name="Zimmer A."/>
            <person name="Hide W."/>
            <person name="Bult C."/>
            <person name="Grimmond S.M."/>
            <person name="Teasdale R.D."/>
            <person name="Liu E.T."/>
            <person name="Brusic V."/>
            <person name="Quackenbush J."/>
            <person name="Wahlestedt C."/>
            <person name="Mattick J.S."/>
            <person name="Hume D.A."/>
            <person name="Kai C."/>
            <person name="Sasaki D."/>
            <person name="Tomaru Y."/>
            <person name="Fukuda S."/>
            <person name="Kanamori-Katayama M."/>
            <person name="Suzuki M."/>
            <person name="Aoki J."/>
            <person name="Arakawa T."/>
            <person name="Iida J."/>
            <person name="Imamura K."/>
            <person name="Itoh M."/>
            <person name="Kato T."/>
            <person name="Kawaji H."/>
            <person name="Kawagashira N."/>
            <person name="Kawashima T."/>
            <person name="Kojima M."/>
            <person name="Kondo S."/>
            <person name="Konno H."/>
            <person name="Nakano K."/>
            <person name="Ninomiya N."/>
            <person name="Nishio T."/>
            <person name="Okada M."/>
            <person name="Plessy C."/>
            <person name="Shibata K."/>
            <person name="Shiraki T."/>
            <person name="Suzuki S."/>
            <person name="Tagami M."/>
            <person name="Waki K."/>
            <person name="Watahiki A."/>
            <person name="Okamura-Oho Y."/>
            <person name="Suzuki H."/>
            <person name="Kawai J."/>
            <person name="Hayashizaki Y."/>
        </authorList>
    </citation>
    <scope>NUCLEOTIDE SEQUENCE [LARGE SCALE MRNA] (ISOFORM 4)</scope>
    <source>
        <strain>C57BL/6J</strain>
        <tissue>Lung</tissue>
        <tissue>Testis</tissue>
    </source>
</reference>
<reference key="3">
    <citation type="journal article" date="2004" name="Genome Res.">
        <title>The status, quality, and expansion of the NIH full-length cDNA project: the Mammalian Gene Collection (MGC).</title>
        <authorList>
            <consortium name="The MGC Project Team"/>
        </authorList>
    </citation>
    <scope>NUCLEOTIDE SEQUENCE [LARGE SCALE MRNA] (ISOFORM 1)</scope>
    <source>
        <strain>C57BL/6J</strain>
        <tissue>Embryo</tissue>
    </source>
</reference>
<reference key="4">
    <citation type="journal article" date="2002" name="Mech. Dev.">
        <title>Foxp4: a novel member of the Foxp subfamily of winged-helix genes co-expressed with Foxp1 and Foxp2 in pulmonary and gut tissues.</title>
        <authorList>
            <person name="Lu M.M."/>
            <person name="Li S."/>
            <person name="Yang H."/>
            <person name="Morrisey E.E."/>
        </authorList>
    </citation>
    <scope>DEVELOPMENTAL STAGE</scope>
</reference>
<reference key="5">
    <citation type="journal article" date="2004" name="Mol. Cell. Biol.">
        <title>Transcriptional and DNA binding activity of the Foxp1/2/4 family is modulated by heterotypic and homotypic protein interactions.</title>
        <authorList>
            <person name="Li S."/>
            <person name="Weidenfeld J."/>
            <person name="Morrisey E.E."/>
        </authorList>
    </citation>
    <scope>FUNCTION</scope>
    <scope>DIMERIZATION</scope>
    <scope>INTERACTION WITH CTBP1</scope>
    <scope>DOMAIN</scope>
    <scope>MUTAGENESIS OF GLU-388 AND 410-PRO--VAL-414</scope>
</reference>
<reference key="6">
    <citation type="journal article" date="2006" name="Nat. Immunol.">
        <title>Foxp1 is an essential transcriptional regulator of B cell development.</title>
        <authorList>
            <person name="Hu H."/>
            <person name="Wang B."/>
            <person name="Borde M."/>
            <person name="Nardone J."/>
            <person name="Maika S."/>
            <person name="Allred L."/>
            <person name="Tucker P.W."/>
            <person name="Rao A."/>
        </authorList>
    </citation>
    <scope>FUNCTION</scope>
</reference>
<reference key="7">
    <citation type="journal article" date="2008" name="Cell">
        <title>Hox repertoires for motor neuron diversity and connectivity gated by a single accessory factor, FoxP1.</title>
        <authorList>
            <person name="Dasen J.S."/>
            <person name="De Camilli A."/>
            <person name="Wang B."/>
            <person name="Tucker P.W."/>
            <person name="Jessell T.M."/>
        </authorList>
    </citation>
    <scope>FUNCTION</scope>
</reference>
<reference key="8">
    <citation type="journal article" date="2008" name="Neuron">
        <title>Coordinated actions of the forkhead protein Foxp1 and Hox proteins in the columnar organization of spinal motor neurons.</title>
        <authorList>
            <person name="Rousso D.L."/>
            <person name="Gaber Z.B."/>
            <person name="Wellik D."/>
            <person name="Morrisey E.E."/>
            <person name="Novitch B.G."/>
        </authorList>
    </citation>
    <scope>FUNCTION</scope>
</reference>
<reference key="9">
    <citation type="journal article" date="2010" name="Cell">
        <title>A tissue-specific atlas of mouse protein phosphorylation and expression.</title>
        <authorList>
            <person name="Huttlin E.L."/>
            <person name="Jedrychowski M.P."/>
            <person name="Elias J.E."/>
            <person name="Goswami T."/>
            <person name="Rad R."/>
            <person name="Beausoleil S.A."/>
            <person name="Villen J."/>
            <person name="Haas W."/>
            <person name="Sowa M.E."/>
            <person name="Gygi S.P."/>
        </authorList>
    </citation>
    <scope>IDENTIFICATION BY MASS SPECTROMETRY [LARGE SCALE ANALYSIS]</scope>
    <source>
        <tissue>Spleen</tissue>
    </source>
</reference>
<reference key="10">
    <citation type="journal article" date="2010" name="Genes Dev.">
        <title>Foxp1 coordinates cardiomyocyte proliferation through both cell-autonomous and nonautonomous mechanisms.</title>
        <authorList>
            <person name="Zhang Y."/>
            <person name="Li S."/>
            <person name="Yuan L."/>
            <person name="Tian Y."/>
            <person name="Weidenfeld J."/>
            <person name="Yang J."/>
            <person name="Liu F."/>
            <person name="Chokas A.L."/>
            <person name="Morrisey E.E."/>
        </authorList>
    </citation>
    <scope>FUNCTION</scope>
</reference>
<reference key="11">
    <citation type="journal article" date="2010" name="J. Neurochem.">
        <title>FoxP1 promotes midbrain identity in embryonic stem cell-derived dopamine neurons by regulating Pitx3.</title>
        <authorList>
            <person name="Konstantoulas C.J."/>
            <person name="Parmar M."/>
            <person name="Li M."/>
        </authorList>
    </citation>
    <scope>FUNCTION</scope>
    <scope>DEVELOPMENTAL STAGE</scope>
</reference>
<reference key="12">
    <citation type="journal article" date="2011" name="Cell">
        <title>An alternative splicing switch regulates embryonic stem cell pluripotency and reprogramming.</title>
        <authorList>
            <person name="Gabut M."/>
            <person name="Samavarchi-Tehrani P."/>
            <person name="Wang X."/>
            <person name="Slobodeniuc V."/>
            <person name="O'Hanlon D."/>
            <person name="Sung H.K."/>
            <person name="Alvarez M."/>
            <person name="Talukder S."/>
            <person name="Pan Q."/>
            <person name="Mazzoni E.O."/>
            <person name="Nedelec S."/>
            <person name="Wichterle H."/>
            <person name="Woltjen K."/>
            <person name="Hughes T.R."/>
            <person name="Zandstra P.W."/>
            <person name="Nagy A."/>
            <person name="Wrana J.L."/>
            <person name="Blencowe B.J."/>
        </authorList>
    </citation>
    <scope>ALTERNATIVE SPLICING (ISOFORM 5)</scope>
    <scope>FUNCTION (ISOFORM 5)</scope>
    <scope>TISSUE SPECIFICITY (ISOFORM 5)</scope>
</reference>
<reference key="13">
    <citation type="journal article" date="2012" name="Development">
        <title>Foxp1/4 control epithelial cell fate during lung development and regeneration through regulation of anterior gradient 2.</title>
        <authorList>
            <person name="Li S."/>
            <person name="Wang Y."/>
            <person name="Zhang Y."/>
            <person name="Lu M.M."/>
            <person name="DeMayo F.J."/>
            <person name="Dekker J.D."/>
            <person name="Tucker P.W."/>
            <person name="Morrisey E.E."/>
        </authorList>
    </citation>
    <scope>FUNCTION</scope>
</reference>
<reference key="14">
    <citation type="journal article" date="2013" name="Development">
        <title>Foxp1 maintains hair follicle stem cell quiescence through regulation of Fgf18.</title>
        <authorList>
            <person name="Leishman E."/>
            <person name="Howard J.M."/>
            <person name="Garcia G.E."/>
            <person name="Miao Q."/>
            <person name="Ku A.T."/>
            <person name="Dekker J.D."/>
            <person name="Tucker H."/>
            <person name="Nguyen H."/>
        </authorList>
    </citation>
    <scope>FUNCTION</scope>
</reference>
<reference key="15">
    <citation type="journal article" date="2014" name="Nat. Immunol.">
        <title>The transcription factor Foxp1 is a critical negative regulator of the differentiation of follicular helper T cells.</title>
        <authorList>
            <person name="Wang H."/>
            <person name="Geng J."/>
            <person name="Wen X."/>
            <person name="Bi E."/>
            <person name="Kossenkov A.V."/>
            <person name="Wolf A.I."/>
            <person name="Tas J."/>
            <person name="Choi Y.S."/>
            <person name="Takata H."/>
            <person name="Day T.J."/>
            <person name="Chang L.Y."/>
            <person name="Sprout S.L."/>
            <person name="Becker E.K."/>
            <person name="Willen J."/>
            <person name="Tian L."/>
            <person name="Wang X."/>
            <person name="Xiao C."/>
            <person name="Jiang P."/>
            <person name="Crotty S."/>
            <person name="Victora G.D."/>
            <person name="Showe L.C."/>
            <person name="Tucker H.O."/>
            <person name="Erikson J."/>
            <person name="Hu H."/>
        </authorList>
    </citation>
    <scope>FUNCTION</scope>
</reference>
<dbReference type="EMBL" id="AF339103">
    <property type="protein sequence ID" value="AAK69648.1"/>
    <property type="molecule type" value="mRNA"/>
</dbReference>
<dbReference type="EMBL" id="AF339104">
    <property type="protein sequence ID" value="AAK69649.1"/>
    <property type="molecule type" value="mRNA"/>
</dbReference>
<dbReference type="EMBL" id="AF339105">
    <property type="protein sequence ID" value="AAK69650.1"/>
    <property type="molecule type" value="mRNA"/>
</dbReference>
<dbReference type="EMBL" id="AK033368">
    <property type="protein sequence ID" value="BAC28249.1"/>
    <property type="molecule type" value="mRNA"/>
</dbReference>
<dbReference type="EMBL" id="AK077062">
    <property type="protein sequence ID" value="BAC36586.1"/>
    <property type="molecule type" value="mRNA"/>
</dbReference>
<dbReference type="EMBL" id="BC064764">
    <property type="protein sequence ID" value="AAH64764.1"/>
    <property type="molecule type" value="mRNA"/>
</dbReference>
<dbReference type="CCDS" id="CCDS39578.1">
    <molecule id="P58462-1"/>
</dbReference>
<dbReference type="RefSeq" id="NP_001184250.1">
    <property type="nucleotide sequence ID" value="NM_001197321.1"/>
</dbReference>
<dbReference type="RefSeq" id="NP_001184251.1">
    <property type="nucleotide sequence ID" value="NM_001197322.1"/>
</dbReference>
<dbReference type="RefSeq" id="NP_444432.1">
    <molecule id="P58462-1"/>
    <property type="nucleotide sequence ID" value="NM_053202.2"/>
</dbReference>
<dbReference type="RefSeq" id="XP_006505385.1">
    <property type="nucleotide sequence ID" value="XM_006505322.1"/>
</dbReference>
<dbReference type="RefSeq" id="XP_006505386.1">
    <property type="nucleotide sequence ID" value="XM_006505323.3"/>
</dbReference>
<dbReference type="SMR" id="P58462"/>
<dbReference type="BioGRID" id="224357">
    <property type="interactions" value="18"/>
</dbReference>
<dbReference type="FunCoup" id="P58462">
    <property type="interactions" value="3479"/>
</dbReference>
<dbReference type="IntAct" id="P58462">
    <property type="interactions" value="6"/>
</dbReference>
<dbReference type="STRING" id="10090.ENSMUSP00000108948"/>
<dbReference type="GlyGen" id="P58462">
    <property type="glycosylation" value="4 sites, 1 O-linked glycan (4 sites)"/>
</dbReference>
<dbReference type="iPTMnet" id="P58462"/>
<dbReference type="PhosphoSitePlus" id="P58462"/>
<dbReference type="jPOST" id="P58462"/>
<dbReference type="PaxDb" id="10090-ENSMUSP00000135181"/>
<dbReference type="PeptideAtlas" id="P58462"/>
<dbReference type="ProteomicsDB" id="271596">
    <molecule id="P58462-1"/>
</dbReference>
<dbReference type="ProteomicsDB" id="271597">
    <molecule id="P58462-2"/>
</dbReference>
<dbReference type="ProteomicsDB" id="271598">
    <molecule id="P58462-3"/>
</dbReference>
<dbReference type="ProteomicsDB" id="271599">
    <molecule id="P58462-4"/>
</dbReference>
<dbReference type="ProteomicsDB" id="271600">
    <molecule id="P58462-5"/>
</dbReference>
<dbReference type="Pumba" id="P58462"/>
<dbReference type="DNASU" id="108655"/>
<dbReference type="Ensembl" id="ENSMUST00000074346.12">
    <molecule id="P58462-1"/>
    <property type="protein sequence ID" value="ENSMUSP00000073953.6"/>
    <property type="gene ID" value="ENSMUSG00000030067.18"/>
</dbReference>
<dbReference type="Ensembl" id="ENSMUST00000113322.9">
    <molecule id="P58462-1"/>
    <property type="protein sequence ID" value="ENSMUSP00000108948.3"/>
    <property type="gene ID" value="ENSMUSG00000030067.18"/>
</dbReference>
<dbReference type="Ensembl" id="ENSMUST00000113329.10">
    <molecule id="P58462-2"/>
    <property type="protein sequence ID" value="ENSMUSP00000108955.4"/>
    <property type="gene ID" value="ENSMUSG00000030067.18"/>
</dbReference>
<dbReference type="GeneID" id="108655"/>
<dbReference type="KEGG" id="mmu:108655"/>
<dbReference type="UCSC" id="uc009dbi.2">
    <molecule id="P58462-1"/>
    <property type="organism name" value="mouse"/>
</dbReference>
<dbReference type="UCSC" id="uc009dbl.2">
    <molecule id="P58462-2"/>
    <property type="organism name" value="mouse"/>
</dbReference>
<dbReference type="AGR" id="MGI:1914004"/>
<dbReference type="CTD" id="27086"/>
<dbReference type="MGI" id="MGI:1914004">
    <property type="gene designation" value="Foxp1"/>
</dbReference>
<dbReference type="VEuPathDB" id="HostDB:ENSMUSG00000030067"/>
<dbReference type="eggNOG" id="KOG4385">
    <property type="taxonomic scope" value="Eukaryota"/>
</dbReference>
<dbReference type="GeneTree" id="ENSGT00940000159892"/>
<dbReference type="InParanoid" id="P58462"/>
<dbReference type="OrthoDB" id="5830876at2759"/>
<dbReference type="BioGRID-ORCS" id="108655">
    <property type="hits" value="6 hits in 79 CRISPR screens"/>
</dbReference>
<dbReference type="ChiTaRS" id="Foxp1">
    <property type="organism name" value="mouse"/>
</dbReference>
<dbReference type="PRO" id="PR:P58462"/>
<dbReference type="Proteomes" id="UP000000589">
    <property type="component" value="Chromosome 6"/>
</dbReference>
<dbReference type="RNAct" id="P58462">
    <property type="molecule type" value="protein"/>
</dbReference>
<dbReference type="Bgee" id="ENSMUSG00000030067">
    <property type="expression patterns" value="Expressed in caudate-putamen and 314 other cell types or tissues"/>
</dbReference>
<dbReference type="ExpressionAtlas" id="P58462">
    <property type="expression patterns" value="baseline and differential"/>
</dbReference>
<dbReference type="GO" id="GO:0005634">
    <property type="term" value="C:nucleus"/>
    <property type="evidence" value="ECO:0000314"/>
    <property type="project" value="MGI"/>
</dbReference>
<dbReference type="GO" id="GO:0003682">
    <property type="term" value="F:chromatin binding"/>
    <property type="evidence" value="ECO:0000314"/>
    <property type="project" value="MGI"/>
</dbReference>
<dbReference type="GO" id="GO:0003677">
    <property type="term" value="F:DNA binding"/>
    <property type="evidence" value="ECO:0000314"/>
    <property type="project" value="MGI"/>
</dbReference>
<dbReference type="GO" id="GO:0003700">
    <property type="term" value="F:DNA-binding transcription factor activity"/>
    <property type="evidence" value="ECO:0000314"/>
    <property type="project" value="MGI"/>
</dbReference>
<dbReference type="GO" id="GO:0000981">
    <property type="term" value="F:DNA-binding transcription factor activity, RNA polymerase II-specific"/>
    <property type="evidence" value="ECO:0000314"/>
    <property type="project" value="MGI"/>
</dbReference>
<dbReference type="GO" id="GO:0001227">
    <property type="term" value="F:DNA-binding transcription repressor activity, RNA polymerase II-specific"/>
    <property type="evidence" value="ECO:0000314"/>
    <property type="project" value="NTNU_SB"/>
</dbReference>
<dbReference type="GO" id="GO:0042802">
    <property type="term" value="F:identical protein binding"/>
    <property type="evidence" value="ECO:0000353"/>
    <property type="project" value="MGI"/>
</dbReference>
<dbReference type="GO" id="GO:0000978">
    <property type="term" value="F:RNA polymerase II cis-regulatory region sequence-specific DNA binding"/>
    <property type="evidence" value="ECO:0000315"/>
    <property type="project" value="NTNU_SB"/>
</dbReference>
<dbReference type="GO" id="GO:0001221">
    <property type="term" value="F:transcription coregulator binding"/>
    <property type="evidence" value="ECO:0000353"/>
    <property type="project" value="UniProtKB"/>
</dbReference>
<dbReference type="GO" id="GO:0008270">
    <property type="term" value="F:zinc ion binding"/>
    <property type="evidence" value="ECO:0007669"/>
    <property type="project" value="UniProtKB-KW"/>
</dbReference>
<dbReference type="GO" id="GO:0055007">
    <property type="term" value="P:cardiac muscle cell differentiation"/>
    <property type="evidence" value="ECO:0000315"/>
    <property type="project" value="MGI"/>
</dbReference>
<dbReference type="GO" id="GO:0042118">
    <property type="term" value="P:endothelial cell activation"/>
    <property type="evidence" value="ECO:0000250"/>
    <property type="project" value="UniProtKB"/>
</dbReference>
<dbReference type="GO" id="GO:0007507">
    <property type="term" value="P:heart development"/>
    <property type="evidence" value="ECO:0000315"/>
    <property type="project" value="MGI"/>
</dbReference>
<dbReference type="GO" id="GO:0033152">
    <property type="term" value="P:immunoglobulin V(D)J recombination"/>
    <property type="evidence" value="ECO:0000315"/>
    <property type="project" value="MGI"/>
</dbReference>
<dbReference type="GO" id="GO:0098582">
    <property type="term" value="P:innate vocalization behavior"/>
    <property type="evidence" value="ECO:0000315"/>
    <property type="project" value="MGI"/>
</dbReference>
<dbReference type="GO" id="GO:0030324">
    <property type="term" value="P:lung development"/>
    <property type="evidence" value="ECO:0000316"/>
    <property type="project" value="MGI"/>
</dbReference>
<dbReference type="GO" id="GO:0061140">
    <property type="term" value="P:lung secretory cell differentiation"/>
    <property type="evidence" value="ECO:0000316"/>
    <property type="project" value="MGI"/>
</dbReference>
<dbReference type="GO" id="GO:0042116">
    <property type="term" value="P:macrophage activation"/>
    <property type="evidence" value="ECO:0000250"/>
    <property type="project" value="UniProtKB"/>
</dbReference>
<dbReference type="GO" id="GO:0042117">
    <property type="term" value="P:monocyte activation"/>
    <property type="evidence" value="ECO:0000250"/>
    <property type="project" value="UniProtKB"/>
</dbReference>
<dbReference type="GO" id="GO:0008045">
    <property type="term" value="P:motor neuron axon guidance"/>
    <property type="evidence" value="ECO:0000315"/>
    <property type="project" value="UniProtKB"/>
</dbReference>
<dbReference type="GO" id="GO:0060766">
    <property type="term" value="P:negative regulation of androgen receptor signaling pathway"/>
    <property type="evidence" value="ECO:0000250"/>
    <property type="project" value="UniProtKB"/>
</dbReference>
<dbReference type="GO" id="GO:0002903">
    <property type="term" value="P:negative regulation of B cell apoptotic process"/>
    <property type="evidence" value="ECO:0000250"/>
    <property type="project" value="UniProtKB"/>
</dbReference>
<dbReference type="GO" id="GO:0045892">
    <property type="term" value="P:negative regulation of DNA-templated transcription"/>
    <property type="evidence" value="ECO:0000314"/>
    <property type="project" value="MGI"/>
</dbReference>
<dbReference type="GO" id="GO:1901250">
    <property type="term" value="P:negative regulation of lung goblet cell differentiation"/>
    <property type="evidence" value="ECO:0000316"/>
    <property type="project" value="MGI"/>
</dbReference>
<dbReference type="GO" id="GO:0000122">
    <property type="term" value="P:negative regulation of transcription by RNA polymerase II"/>
    <property type="evidence" value="ECO:0000314"/>
    <property type="project" value="NTNU_SB"/>
</dbReference>
<dbReference type="GO" id="GO:0036035">
    <property type="term" value="P:osteoclast development"/>
    <property type="evidence" value="ECO:0000250"/>
    <property type="project" value="UniProtKB"/>
</dbReference>
<dbReference type="GO" id="GO:0030316">
    <property type="term" value="P:osteoclast differentiation"/>
    <property type="evidence" value="ECO:0000250"/>
    <property type="project" value="UniProtKB"/>
</dbReference>
<dbReference type="GO" id="GO:0045893">
    <property type="term" value="P:positive regulation of DNA-templated transcription"/>
    <property type="evidence" value="ECO:0000315"/>
    <property type="project" value="UniProtKB"/>
</dbReference>
<dbReference type="GO" id="GO:0010595">
    <property type="term" value="P:positive regulation of endothelial cell migration"/>
    <property type="evidence" value="ECO:0000250"/>
    <property type="project" value="UniProtKB"/>
</dbReference>
<dbReference type="GO" id="GO:0050679">
    <property type="term" value="P:positive regulation of epithelial cell proliferation"/>
    <property type="evidence" value="ECO:0000316"/>
    <property type="project" value="MGI"/>
</dbReference>
<dbReference type="GO" id="GO:0002639">
    <property type="term" value="P:positive regulation of immunoglobulin production"/>
    <property type="evidence" value="ECO:0000315"/>
    <property type="project" value="MGI"/>
</dbReference>
<dbReference type="GO" id="GO:0032745">
    <property type="term" value="P:positive regulation of interleukin-21 production"/>
    <property type="evidence" value="ECO:0000314"/>
    <property type="project" value="UniProtKB"/>
</dbReference>
<dbReference type="GO" id="GO:0002053">
    <property type="term" value="P:positive regulation of mesenchymal cell proliferation"/>
    <property type="evidence" value="ECO:0000316"/>
    <property type="project" value="MGI"/>
</dbReference>
<dbReference type="GO" id="GO:0048661">
    <property type="term" value="P:positive regulation of smooth muscle cell proliferation"/>
    <property type="evidence" value="ECO:0000250"/>
    <property type="project" value="UniProtKB"/>
</dbReference>
<dbReference type="GO" id="GO:1904263">
    <property type="term" value="P:positive regulation of TORC1 signaling"/>
    <property type="evidence" value="ECO:0000316"/>
    <property type="project" value="MGI"/>
</dbReference>
<dbReference type="GO" id="GO:0045944">
    <property type="term" value="P:positive regulation of transcription by RNA polymerase II"/>
    <property type="evidence" value="ECO:0000315"/>
    <property type="project" value="MGI"/>
</dbReference>
<dbReference type="GO" id="GO:0002329">
    <property type="term" value="P:pre-B cell differentiation"/>
    <property type="evidence" value="ECO:0000315"/>
    <property type="project" value="MGI"/>
</dbReference>
<dbReference type="GO" id="GO:0098900">
    <property type="term" value="P:regulation of action potential"/>
    <property type="evidence" value="ECO:0000315"/>
    <property type="project" value="MGI"/>
</dbReference>
<dbReference type="GO" id="GO:0060765">
    <property type="term" value="P:regulation of androgen receptor signaling pathway"/>
    <property type="evidence" value="ECO:0000316"/>
    <property type="project" value="MGI"/>
</dbReference>
<dbReference type="GO" id="GO:0060043">
    <property type="term" value="P:regulation of cardiac muscle cell proliferation"/>
    <property type="evidence" value="ECO:0000315"/>
    <property type="project" value="MGI"/>
</dbReference>
<dbReference type="GO" id="GO:2000341">
    <property type="term" value="P:regulation of chemokine (C-X-C motif) ligand 2 production"/>
    <property type="evidence" value="ECO:0000250"/>
    <property type="project" value="UniProtKB"/>
</dbReference>
<dbReference type="GO" id="GO:1900424">
    <property type="term" value="P:regulation of defense response to bacterium"/>
    <property type="evidence" value="ECO:0000250"/>
    <property type="project" value="UniProtKB"/>
</dbReference>
<dbReference type="GO" id="GO:1901249">
    <property type="term" value="P:regulation of lung goblet cell differentiation"/>
    <property type="evidence" value="ECO:0000316"/>
    <property type="project" value="MGI"/>
</dbReference>
<dbReference type="GO" id="GO:1901256">
    <property type="term" value="P:regulation of macrophage colony-stimulating factor production"/>
    <property type="evidence" value="ECO:0000250"/>
    <property type="project" value="UniProtKB"/>
</dbReference>
<dbReference type="GO" id="GO:0045655">
    <property type="term" value="P:regulation of monocyte differentiation"/>
    <property type="evidence" value="ECO:0000250"/>
    <property type="project" value="UniProtKB"/>
</dbReference>
<dbReference type="GO" id="GO:0032680">
    <property type="term" value="P:regulation of tumor necrosis factor production"/>
    <property type="evidence" value="ECO:0000250"/>
    <property type="project" value="UniProtKB"/>
</dbReference>
<dbReference type="GO" id="GO:0032496">
    <property type="term" value="P:response to lipopolysaccharide"/>
    <property type="evidence" value="ECO:0000250"/>
    <property type="project" value="UniProtKB"/>
</dbReference>
<dbReference type="GO" id="GO:0007519">
    <property type="term" value="P:skeletal muscle tissue development"/>
    <property type="evidence" value="ECO:0000316"/>
    <property type="project" value="MGI"/>
</dbReference>
<dbReference type="GO" id="GO:0048745">
    <property type="term" value="P:smooth muscle tissue development"/>
    <property type="evidence" value="ECO:0000316"/>
    <property type="project" value="MGI"/>
</dbReference>
<dbReference type="GO" id="GO:0061470">
    <property type="term" value="P:T follicular helper cell differentiation"/>
    <property type="evidence" value="ECO:0000314"/>
    <property type="project" value="UniProtKB"/>
</dbReference>
<dbReference type="GO" id="GO:0006366">
    <property type="term" value="P:transcription by RNA polymerase II"/>
    <property type="evidence" value="ECO:0000315"/>
    <property type="project" value="MGI"/>
</dbReference>
<dbReference type="GO" id="GO:0021517">
    <property type="term" value="P:ventral spinal cord development"/>
    <property type="evidence" value="ECO:0000270"/>
    <property type="project" value="UniProtKB"/>
</dbReference>
<dbReference type="CDD" id="cd20065">
    <property type="entry name" value="FH_FOXP2"/>
    <property type="match status" value="1"/>
</dbReference>
<dbReference type="FunFam" id="1.20.5.340:FF:000005">
    <property type="entry name" value="Forkhead box P1, isoform CRA_f"/>
    <property type="match status" value="1"/>
</dbReference>
<dbReference type="FunFam" id="1.10.10.10:FF:000010">
    <property type="entry name" value="Forkhead box P2 isoform B"/>
    <property type="match status" value="1"/>
</dbReference>
<dbReference type="Gene3D" id="1.20.5.340">
    <property type="match status" value="1"/>
</dbReference>
<dbReference type="Gene3D" id="1.10.10.10">
    <property type="entry name" value="Winged helix-like DNA-binding domain superfamily/Winged helix DNA-binding domain"/>
    <property type="match status" value="1"/>
</dbReference>
<dbReference type="InterPro" id="IPR047412">
    <property type="entry name" value="FH_FOXP1_P2"/>
</dbReference>
<dbReference type="InterPro" id="IPR001766">
    <property type="entry name" value="Fork_head_dom"/>
</dbReference>
<dbReference type="InterPro" id="IPR050998">
    <property type="entry name" value="FOXP"/>
</dbReference>
<dbReference type="InterPro" id="IPR032354">
    <property type="entry name" value="FOXP-CC"/>
</dbReference>
<dbReference type="InterPro" id="IPR030456">
    <property type="entry name" value="TF_fork_head_CS_2"/>
</dbReference>
<dbReference type="InterPro" id="IPR036388">
    <property type="entry name" value="WH-like_DNA-bd_sf"/>
</dbReference>
<dbReference type="InterPro" id="IPR036390">
    <property type="entry name" value="WH_DNA-bd_sf"/>
</dbReference>
<dbReference type="PANTHER" id="PTHR45796">
    <property type="entry name" value="FORKHEAD BOX P, ISOFORM C"/>
    <property type="match status" value="1"/>
</dbReference>
<dbReference type="PANTHER" id="PTHR45796:SF3">
    <property type="entry name" value="FORKHEAD BOX PROTEIN P1"/>
    <property type="match status" value="1"/>
</dbReference>
<dbReference type="Pfam" id="PF00250">
    <property type="entry name" value="Forkhead"/>
    <property type="match status" value="1"/>
</dbReference>
<dbReference type="Pfam" id="PF16159">
    <property type="entry name" value="FOXP-CC"/>
    <property type="match status" value="1"/>
</dbReference>
<dbReference type="PRINTS" id="PR00053">
    <property type="entry name" value="FORKHEAD"/>
</dbReference>
<dbReference type="SMART" id="SM00339">
    <property type="entry name" value="FH"/>
    <property type="match status" value="1"/>
</dbReference>
<dbReference type="SUPFAM" id="SSF46785">
    <property type="entry name" value="Winged helix' DNA-binding domain"/>
    <property type="match status" value="1"/>
</dbReference>
<dbReference type="PROSITE" id="PS00658">
    <property type="entry name" value="FORK_HEAD_2"/>
    <property type="match status" value="1"/>
</dbReference>
<dbReference type="PROSITE" id="PS50039">
    <property type="entry name" value="FORK_HEAD_3"/>
    <property type="match status" value="1"/>
</dbReference>
<dbReference type="PROSITE" id="PS00028">
    <property type="entry name" value="ZINC_FINGER_C2H2_1"/>
    <property type="match status" value="1"/>
</dbReference>
<comment type="function">
    <text evidence="1 5 6 7 8 9 10 12 13 14 18 19 20">Transcriptional repressor. Can act with CTBP1 to synergistically repress transcription but CTPBP1 is not essential (PubMed:11358962, PubMed:14701752). Plays an important role in the specification and differentiation of lung epithelium. Acts cooperatively with FOXP4 to regulate lung secretory epithelial cell fate and regeneration by restricting the goblet cell lineage program; the function may involve regulation of AGR2 (PubMed:11358962, PubMed:22675208). Essential transcriptional regulator of B-cell development (PubMed:16819554). Involved in regulation of cardiac muscle cell proliferation (PubMed:20713518). Involved in the columnar organization of spinal motor neurons. Promotes the formation of the lateral motor neuron column (LMC) and the preganglionic motor column (PGC) and is required for respective appropriate motor axon projections. The segment-appropriate generation of spinal cord motor columns requires cooperation with other Hox proteins (PubMed:18662545, PubMed:18667151). Can regulate PITX3 promoter activity; may promote midbrain identity in embryonic stem cell-derived dopamine neurons by regulating PITX3 (PubMed:20175877). Negatively regulates the differentiation of T follicular helper cells T(FH)s (PubMed:24859450). Involved in maintenance of hair follicle stem cell quiescence; the function probably involves regulation of FGF18 (PubMed:23946441). Represses transcription of various pro-apoptotic genes and cooperates with NF-kappa B-signaling in promoting B-cell expansion by inhibition of caspase-dependent apoptosis. Binds to CSF1R promoter elements and is involved in regulation of monocyte differentiation and macrophage functions; repression of CSF1R in monocytes seems to involve NCOR2 as corepressor. Involved in endothelial cell proliferation, tube formation and migration indicative for a role in angiogenesis; the role in neovascularization seems to implicate suppression of SEMA5B. Can negatively regulate androgen receptor signaling (By similarity). Acts as a transcriptional activator of the FBXL7 promoter; this activity is regulated by AURKA (By similarity).</text>
</comment>
<comment type="function">
    <molecule>Isoform 5</molecule>
    <text evidence="1 11">Involved in transcriptional regulation in embryonic stem cells (ESCs). Stimulates expression of transcription factors that are required for pluripotency and decreases expression of differentiation-associated genes. Has distinct DNA-binding specifities as compared to the canonical form and preferentially binds DNA with the sequence 5'-CGATACAA-3' (or closely related sequences) (By similarity). Promotes ESC self-renewal and pluripotency (PubMed:21924763).</text>
</comment>
<comment type="subunit">
    <text evidence="1 5">Forms homodimers and heterodimers with FOXP2 and FOXP4. Dimerization is required for DNA-binding. Self-associates (By similarity). Interacts with CTBP1 (PubMed:14701752). Interacts with NCOR2 and AR. Interacts with FOXP2 (By similarity). Interacts with TBR1 (By similarity). Interacts with AURKA; this interaction facilitates the phosphorylation of FOXP1, which suppresses the expression of FBXL7 (By similarity). Interacts with ZMYM2 (By similarity).</text>
</comment>
<comment type="subcellular location">
    <subcellularLocation>
        <location evidence="1">Nucleus</location>
    </subcellularLocation>
    <text evidence="1">Not found in the nucleolus.</text>
</comment>
<comment type="alternative products">
    <event type="alternative splicing"/>
    <event type="alternative initiation"/>
    <isoform>
        <id>P58462-1</id>
        <name>1</name>
        <name>A</name>
        <sequence type="displayed"/>
    </isoform>
    <isoform>
        <id>P58462-2</id>
        <name>2</name>
        <name>B</name>
        <sequence type="described" ref="VSP_001557"/>
    </isoform>
    <isoform>
        <id>P58462-3</id>
        <name>3</name>
        <name>C</name>
        <sequence type="described" ref="VSP_018732"/>
    </isoform>
    <isoform>
        <id>P58462-4</id>
        <name>4</name>
        <sequence type="described" ref="VSP_026670"/>
    </isoform>
    <isoform>
        <id>P58462-5</id>
        <name>5</name>
        <name>FOXP1-ES</name>
        <sequence type="described" ref="VSP_057342"/>
    </isoform>
</comment>
<comment type="tissue specificity">
    <text evidence="11">Isoform 5 is specifically expressed in embryonic stem cells (PubMed:21924763). Highest expression in the lung, brain, and spleen. Lower expression in heart, skeletal muscle, kidney, small intestine (isoform 3 not present) and liver.</text>
</comment>
<comment type="developmental stage">
    <text evidence="4 9">Expressed in developing lung, neural, intestinal and cardiovascular tissues. Expressed in both the airway epithelium of the forming lung as well as in the surrounding mesenchyme. By 16.5 dpc, expressed throughout the conducting airway epithelium, with highest expression in the distal alveolar regions. Also expressed in the endotheial cells of the pulmonary vasculature. During intestinal development, expressed in the mucosal layer but absent from the epithelium at 12.5 dpc. By 16.5 dpc, expressed in both the inner circular and outer longitudinal muscular layers of the intestine as well as in the epithelium of the intestine and developing stomach (PubMed:14516685). Expressed in 12.5 dpc midbrain dopaminergic neurons (PubMed:20175877).</text>
</comment>
<comment type="domain">
    <text evidence="5">The leucine-zipper is required for dimerization and transcriptional repression.</text>
</comment>
<comment type="miscellaneous">
    <molecule>Isoform 3</molecule>
    <text evidence="17">Produced by alternative initiation at Met-251 of isoform 1.</text>
</comment>
<comment type="miscellaneous">
    <molecule>Isoform 4</molecule>
    <text evidence="17">Produced by alternative splicing.</text>
</comment>
<gene>
    <name type="primary">Foxp1</name>
</gene>
<keyword id="KW-0024">Alternative initiation</keyword>
<keyword id="KW-0025">Alternative splicing</keyword>
<keyword id="KW-0238">DNA-binding</keyword>
<keyword id="KW-1017">Isopeptide bond</keyword>
<keyword id="KW-0479">Metal-binding</keyword>
<keyword id="KW-0539">Nucleus</keyword>
<keyword id="KW-0597">Phosphoprotein</keyword>
<keyword id="KW-1185">Reference proteome</keyword>
<keyword id="KW-0678">Repressor</keyword>
<keyword id="KW-0804">Transcription</keyword>
<keyword id="KW-0805">Transcription regulation</keyword>
<keyword id="KW-0832">Ubl conjugation</keyword>
<keyword id="KW-0862">Zinc</keyword>
<keyword id="KW-0863">Zinc-finger</keyword>
<evidence type="ECO:0000250" key="1">
    <source>
        <dbReference type="UniProtKB" id="Q9H334"/>
    </source>
</evidence>
<evidence type="ECO:0000255" key="2">
    <source>
        <dbReference type="PROSITE-ProRule" id="PRU00089"/>
    </source>
</evidence>
<evidence type="ECO:0000256" key="3">
    <source>
        <dbReference type="SAM" id="MobiDB-lite"/>
    </source>
</evidence>
<evidence type="ECO:0000269" key="4">
    <source>
    </source>
</evidence>
<evidence type="ECO:0000269" key="5">
    <source>
    </source>
</evidence>
<evidence type="ECO:0000269" key="6">
    <source>
    </source>
</evidence>
<evidence type="ECO:0000269" key="7">
    <source>
    </source>
</evidence>
<evidence type="ECO:0000269" key="8">
    <source>
    </source>
</evidence>
<evidence type="ECO:0000269" key="9">
    <source>
    </source>
</evidence>
<evidence type="ECO:0000269" key="10">
    <source>
    </source>
</evidence>
<evidence type="ECO:0000269" key="11">
    <source>
    </source>
</evidence>
<evidence type="ECO:0000269" key="12">
    <source>
    </source>
</evidence>
<evidence type="ECO:0000269" key="13">
    <source>
    </source>
</evidence>
<evidence type="ECO:0000269" key="14">
    <source>
    </source>
</evidence>
<evidence type="ECO:0000303" key="15">
    <source>
    </source>
</evidence>
<evidence type="ECO:0000303" key="16">
    <source>
    </source>
</evidence>
<evidence type="ECO:0000305" key="17"/>
<evidence type="ECO:0000305" key="18">
    <source>
    </source>
</evidence>
<evidence type="ECO:0000305" key="19">
    <source>
    </source>
</evidence>
<evidence type="ECO:0000305" key="20">
    <source>
    </source>
</evidence>
<organism>
    <name type="scientific">Mus musculus</name>
    <name type="common">Mouse</name>
    <dbReference type="NCBI Taxonomy" id="10090"/>
    <lineage>
        <taxon>Eukaryota</taxon>
        <taxon>Metazoa</taxon>
        <taxon>Chordata</taxon>
        <taxon>Craniata</taxon>
        <taxon>Vertebrata</taxon>
        <taxon>Euteleostomi</taxon>
        <taxon>Mammalia</taxon>
        <taxon>Eutheria</taxon>
        <taxon>Euarchontoglires</taxon>
        <taxon>Glires</taxon>
        <taxon>Rodentia</taxon>
        <taxon>Myomorpha</taxon>
        <taxon>Muroidea</taxon>
        <taxon>Muridae</taxon>
        <taxon>Murinae</taxon>
        <taxon>Mus</taxon>
        <taxon>Mus</taxon>
    </lineage>
</organism>
<name>FOXP1_MOUSE</name>
<sequence>MMQESGSETKSNGSAIQNGSSGGNHLLECGALRDTRSNGEAPAVDLGAADLAHVQQQQQQALQVARQLLLQQQQQQQQQQQQQQQQQQQQQQQQQQQQQQQQQQQQQVSGLKSPKRNDKQPALQVPVSVAMMTPQVITPQQMQQILQQQVLSPQQLQVLLQQQQALMLQQQLQEFYKKQQEQLQLQLLQQQHAGKQPKEQQVATQQLAFQQQLLQMQQLQQQHLLSLQRQGLLTIQPGQPALPLQPLAQGMIPTELQQLWKEVTSAHTAEETTSSNHSSLDLTSTCVSSSAPSKSSLIMNPHASTNGQLSVHTPKRESLSHEEHPHSHPLYGHGVCKWPGCEAVCDDFPAFLKHLNSEHALDDRSTAQCRVQMQVVQQLELQLAKDKERLQAMMTHLHVKSTEPKAAPQPLNLVSSVTLSKSASEASPQSLPHTPTTPTAPLTPVTQGPSVITTTSMHTVGPIRRRYSDKYNVPISSADIAQNQEFYKNAEVRPPFTYASLIRQAILESPEKQLTLNEIYNWFTRMFAYFRRNAATWKNAVRHNLSLHKCFVRVENVKGAVWTVDEVEFQKRRPQKISGNPSLIKNMQSSHAYCTPLNAALQASMAENSIPLYTTASMGNPTLGSLASAIREELNGAMEHTNSNESDSSPGRSPMQAVHPIHVKEEPLDPEEAEGPLSLVTTANHSPDFDHDRDYEDEPVNEDME</sequence>
<feature type="chain" id="PRO_0000009336" description="Forkhead box protein P1">
    <location>
        <begin position="1"/>
        <end position="705"/>
    </location>
</feature>
<feature type="zinc finger region" description="C2H2-type">
    <location>
        <begin position="334"/>
        <end position="359"/>
    </location>
</feature>
<feature type="DNA-binding region" description="Fork-head" evidence="2">
    <location>
        <begin position="493"/>
        <end position="583"/>
    </location>
</feature>
<feature type="region of interest" description="Disordered" evidence="3">
    <location>
        <begin position="1"/>
        <end position="41"/>
    </location>
</feature>
<feature type="region of interest" description="Disordered" evidence="3">
    <location>
        <begin position="267"/>
        <end position="286"/>
    </location>
</feature>
<feature type="region of interest" description="Disordered" evidence="3">
    <location>
        <begin position="291"/>
        <end position="326"/>
    </location>
</feature>
<feature type="region of interest" description="Leucine-zipper">
    <location>
        <begin position="376"/>
        <end position="397"/>
    </location>
</feature>
<feature type="region of interest" description="CTBP1-binding">
    <location>
        <begin position="410"/>
        <end position="414"/>
    </location>
</feature>
<feature type="region of interest" description="Disordered" evidence="3">
    <location>
        <begin position="418"/>
        <end position="450"/>
    </location>
</feature>
<feature type="region of interest" description="Disordered" evidence="3">
    <location>
        <begin position="639"/>
        <end position="705"/>
    </location>
</feature>
<feature type="compositionally biased region" description="Polar residues" evidence="3">
    <location>
        <begin position="1"/>
        <end position="19"/>
    </location>
</feature>
<feature type="compositionally biased region" description="Polar residues" evidence="3">
    <location>
        <begin position="276"/>
        <end position="286"/>
    </location>
</feature>
<feature type="compositionally biased region" description="Polar residues" evidence="3">
    <location>
        <begin position="291"/>
        <end position="311"/>
    </location>
</feature>
<feature type="compositionally biased region" description="Basic and acidic residues" evidence="3">
    <location>
        <begin position="314"/>
        <end position="326"/>
    </location>
</feature>
<feature type="compositionally biased region" description="Polar residues" evidence="3">
    <location>
        <begin position="418"/>
        <end position="431"/>
    </location>
</feature>
<feature type="compositionally biased region" description="Low complexity" evidence="3">
    <location>
        <begin position="432"/>
        <end position="446"/>
    </location>
</feature>
<feature type="compositionally biased region" description="Polar residues" evidence="3">
    <location>
        <begin position="640"/>
        <end position="651"/>
    </location>
</feature>
<feature type="compositionally biased region" description="Acidic residues" evidence="3">
    <location>
        <begin position="695"/>
        <end position="705"/>
    </location>
</feature>
<feature type="modified residue" description="Phosphoserine" evidence="1">
    <location>
        <position position="113"/>
    </location>
</feature>
<feature type="modified residue" description="Phosphothreonine" evidence="1">
    <location>
        <position position="681"/>
    </location>
</feature>
<feature type="modified residue" description="Phosphoserine" evidence="1">
    <location>
        <position position="686"/>
    </location>
</feature>
<feature type="cross-link" description="Glycyl lysine isopeptide (Lys-Gly) (interchain with G-Cter in SUMO2)" evidence="1">
    <location>
        <position position="315"/>
    </location>
</feature>
<feature type="cross-link" description="Glycyl lysine isopeptide (Lys-Gly) (interchain with G-Cter in SUMO2)" evidence="1">
    <location>
        <position position="400"/>
    </location>
</feature>
<feature type="cross-link" description="Glycyl lysine isopeptide (Lys-Gly) (interchain with G-Cter in SUMO2)" evidence="1">
    <location>
        <position position="405"/>
    </location>
</feature>
<feature type="cross-link" description="Glycyl lysine isopeptide (Lys-Gly) (interchain with G-Cter in SUMO2)" evidence="1">
    <location>
        <position position="470"/>
    </location>
</feature>
<feature type="splice variant" id="VSP_018732" description="In isoform 3." evidence="15">
    <location>
        <begin position="1"/>
        <end position="250"/>
    </location>
</feature>
<feature type="splice variant" id="VSP_026670" description="In isoform 4." evidence="16">
    <location>
        <begin position="1"/>
        <end position="130"/>
    </location>
</feature>
<feature type="splice variant" id="VSP_001557" description="In isoform 2." evidence="15">
    <location>
        <begin position="539"/>
        <end position="602"/>
    </location>
</feature>
<feature type="splice variant" id="VSP_057342" description="In isoform 5." evidence="11">
    <original>AVRHNLSLHKCFVRVENVKGAVWTVDEVEFQKRRPQKISG</original>
    <variation>GAIRTLSLHKCFIRVEDEFGSFWTVDDEEFLRGRHIQRGRPRKYCPDENSDELGAH</variation>
    <location>
        <begin position="540"/>
        <end position="579"/>
    </location>
</feature>
<feature type="mutagenesis site" description="Loss of dimerization. Almost complete loss of DNA-binding. Reduced transcriptional repression activity." evidence="5">
    <location>
        <position position="388"/>
    </location>
</feature>
<feature type="mutagenesis site" description="No significant effect on transcriptional repression activity." evidence="5">
    <original>PLNLV</original>
    <variation>AANAA</variation>
    <location>
        <begin position="410"/>
        <end position="414"/>
    </location>
</feature>
<feature type="sequence conflict" description="In Ref. 3; AAH64764." evidence="17" ref="3">
    <location>
        <begin position="61"/>
        <end position="92"/>
    </location>
</feature>
<feature type="sequence conflict" description="In Ref. 2; BAC28249/BAC36586." evidence="17" ref="2">
    <original>E</original>
    <variation>EQ</variation>
    <location>
        <position position="199"/>
    </location>
</feature>
<feature type="sequence conflict" description="In Ref. 2; BAC28249." evidence="17" ref="2">
    <original>D</original>
    <variation>H</variation>
    <location>
        <position position="281"/>
    </location>
</feature>
<feature type="sequence conflict" description="In Ref. 2; BAC28249." evidence="17" ref="2">
    <original>K</original>
    <variation>T</variation>
    <location>
        <position position="353"/>
    </location>
</feature>
<feature type="sequence conflict" description="In Ref. 2; BAC28249." evidence="17" ref="2">
    <original>L</original>
    <variation>F</variation>
    <location>
        <position position="597"/>
    </location>
</feature>
<protein>
    <recommendedName>
        <fullName>Forkhead box protein P1</fullName>
    </recommendedName>
    <alternativeName>
        <fullName>Forkhead-related transcription factor 1</fullName>
    </alternativeName>
</protein>
<accession>P58462</accession>
<accession>Q6P221</accession>
<accession>Q8C5V2</accession>
<accession>Q8CCD9</accession>
<proteinExistence type="evidence at protein level"/>